<dbReference type="EMBL" id="K02380">
    <property type="protein sequence ID" value="AAA99230.1"/>
    <property type="molecule type" value="Genomic_DNA"/>
</dbReference>
<dbReference type="EMBL" id="X02954">
    <property type="protein sequence ID" value="CAA26698.1"/>
    <property type="molecule type" value="Genomic_DNA"/>
</dbReference>
<dbReference type="RefSeq" id="WP_015974261.1">
    <property type="nucleotide sequence ID" value="NZ_BFJS01000032.1"/>
</dbReference>
<dbReference type="PDB" id="3EZ2">
    <property type="method" value="X-ray"/>
    <property type="resolution" value="2.05 A"/>
    <property type="chains" value="A/B=1-398"/>
</dbReference>
<dbReference type="PDB" id="3EZ6">
    <property type="method" value="X-ray"/>
    <property type="resolution" value="2.58 A"/>
    <property type="chains" value="A/B=1-398"/>
</dbReference>
<dbReference type="PDB" id="3EZ7">
    <property type="method" value="X-ray"/>
    <property type="resolution" value="2.92 A"/>
    <property type="chains" value="A=1-398"/>
</dbReference>
<dbReference type="PDBsum" id="3EZ2"/>
<dbReference type="PDBsum" id="3EZ6"/>
<dbReference type="PDBsum" id="3EZ7"/>
<dbReference type="SMR" id="P07620"/>
<dbReference type="IntAct" id="P07620">
    <property type="interactions" value="1"/>
</dbReference>
<dbReference type="MINT" id="P07620"/>
<dbReference type="KEGG" id="vg:2777494"/>
<dbReference type="EvolutionaryTrace" id="P07620"/>
<dbReference type="GO" id="GO:0042802">
    <property type="term" value="F:identical protein binding"/>
    <property type="evidence" value="ECO:0000353"/>
    <property type="project" value="IntAct"/>
</dbReference>
<dbReference type="GO" id="GO:0030541">
    <property type="term" value="P:plasmid partitioning"/>
    <property type="evidence" value="ECO:0007669"/>
    <property type="project" value="UniProtKB-KW"/>
</dbReference>
<dbReference type="CDD" id="cd02042">
    <property type="entry name" value="ParAB_family"/>
    <property type="match status" value="1"/>
</dbReference>
<dbReference type="Gene3D" id="1.10.1660.30">
    <property type="match status" value="1"/>
</dbReference>
<dbReference type="Gene3D" id="3.40.50.300">
    <property type="entry name" value="P-loop containing nucleotide triphosphate hydrolases"/>
    <property type="match status" value="1"/>
</dbReference>
<dbReference type="InterPro" id="IPR025669">
    <property type="entry name" value="AAA_dom"/>
</dbReference>
<dbReference type="InterPro" id="IPR050678">
    <property type="entry name" value="DNA_Partitioning_ATPase"/>
</dbReference>
<dbReference type="InterPro" id="IPR041250">
    <property type="entry name" value="HTH_54"/>
</dbReference>
<dbReference type="InterPro" id="IPR027417">
    <property type="entry name" value="P-loop_NTPase"/>
</dbReference>
<dbReference type="PANTHER" id="PTHR13696">
    <property type="entry name" value="P-LOOP CONTAINING NUCLEOSIDE TRIPHOSPHATE HYDROLASE"/>
    <property type="match status" value="1"/>
</dbReference>
<dbReference type="PANTHER" id="PTHR13696:SF98">
    <property type="entry name" value="PLASMID PARTITION PROTEIN A"/>
    <property type="match status" value="1"/>
</dbReference>
<dbReference type="Pfam" id="PF13614">
    <property type="entry name" value="AAA_31"/>
    <property type="match status" value="1"/>
</dbReference>
<dbReference type="Pfam" id="PF18607">
    <property type="entry name" value="HTH_54"/>
    <property type="match status" value="1"/>
</dbReference>
<dbReference type="SUPFAM" id="SSF52540">
    <property type="entry name" value="P-loop containing nucleoside triphosphate hydrolases"/>
    <property type="match status" value="1"/>
</dbReference>
<reference key="1">
    <citation type="journal article" date="1985" name="J. Mol. Biol.">
        <title>Partition of unit-copy miniplasmids to daughter cells. III. The DNA sequence and functional organization of the P1 partition region.</title>
        <authorList>
            <person name="Abeles A.L."/>
            <person name="Friedman S.A."/>
            <person name="Austin S.J."/>
        </authorList>
    </citation>
    <scope>NUCLEOTIDE SEQUENCE [GENOMIC DNA]</scope>
</reference>
<reference key="2">
    <citation type="journal article" date="1991" name="EMBO J.">
        <title>The MinD protein is a membrane ATPase required for the correct placement of the Escherichia coli division site.</title>
        <authorList>
            <person name="de Boer P.A.J."/>
            <person name="Crossley R.E."/>
            <person name="Hand A.R."/>
            <person name="Rothfield L.I."/>
        </authorList>
    </citation>
    <scope>NUCLEOTIDE SEQUENCE [GENOMIC DNA]</scope>
</reference>
<keyword id="KW-0002">3D-structure</keyword>
<keyword id="KW-0614">Plasmid</keyword>
<keyword id="KW-0616">Plasmid partition</keyword>
<gene>
    <name type="primary">parA</name>
</gene>
<organism>
    <name type="scientific">Escherichia coli</name>
    <dbReference type="NCBI Taxonomy" id="562"/>
    <lineage>
        <taxon>Bacteria</taxon>
        <taxon>Pseudomonadati</taxon>
        <taxon>Pseudomonadota</taxon>
        <taxon>Gammaproteobacteria</taxon>
        <taxon>Enterobacterales</taxon>
        <taxon>Enterobacteriaceae</taxon>
        <taxon>Escherichia</taxon>
    </lineage>
</organism>
<evidence type="ECO:0000305" key="1"/>
<evidence type="ECO:0007829" key="2">
    <source>
        <dbReference type="PDB" id="3EZ2"/>
    </source>
</evidence>
<evidence type="ECO:0007829" key="3">
    <source>
        <dbReference type="PDB" id="3EZ7"/>
    </source>
</evidence>
<accession>P07620</accession>
<name>PARA_ECOLX</name>
<comment type="function">
    <text>This protein is essential for plasmid partition. It ensures the proper distribution of newly replicated plasmids to daughter cells during cell division. ParA is trans-acting.</text>
</comment>
<comment type="interaction">
    <interactant intactId="EBI-7011519">
        <id>P07620</id>
    </interactant>
    <interactant intactId="EBI-7011519">
        <id>P07620</id>
        <label>parA</label>
    </interactant>
    <organismsDiffer>false</organismsDiffer>
    <experiments>3</experiments>
</comment>
<comment type="similarity">
    <text evidence="1">Belongs to the ParA family.</text>
</comment>
<geneLocation type="plasmid">
    <name>P1</name>
</geneLocation>
<feature type="chain" id="PRO_0000068404" description="Plasmid partition protein A">
    <location>
        <begin position="1"/>
        <end position="398"/>
    </location>
</feature>
<feature type="helix" evidence="2">
    <location>
        <begin position="6"/>
        <end position="25"/>
    </location>
</feature>
<feature type="turn" evidence="2">
    <location>
        <begin position="26"/>
        <end position="28"/>
    </location>
</feature>
<feature type="helix" evidence="2">
    <location>
        <begin position="43"/>
        <end position="48"/>
    </location>
</feature>
<feature type="helix" evidence="2">
    <location>
        <begin position="54"/>
        <end position="67"/>
    </location>
</feature>
<feature type="strand" evidence="2">
    <location>
        <begin position="73"/>
        <end position="75"/>
    </location>
</feature>
<feature type="strand" evidence="2">
    <location>
        <begin position="77"/>
        <end position="82"/>
    </location>
</feature>
<feature type="helix" evidence="2">
    <location>
        <begin position="86"/>
        <end position="95"/>
    </location>
</feature>
<feature type="helix" evidence="2">
    <location>
        <begin position="101"/>
        <end position="103"/>
    </location>
</feature>
<feature type="strand" evidence="2">
    <location>
        <begin position="109"/>
        <end position="113"/>
    </location>
</feature>
<feature type="strand" evidence="2">
    <location>
        <begin position="116"/>
        <end position="121"/>
    </location>
</feature>
<feature type="helix" evidence="2">
    <location>
        <begin position="122"/>
        <end position="135"/>
    </location>
</feature>
<feature type="turn" evidence="2">
    <location>
        <begin position="137"/>
        <end position="139"/>
    </location>
</feature>
<feature type="helix" evidence="2">
    <location>
        <begin position="140"/>
        <end position="142"/>
    </location>
</feature>
<feature type="strand" evidence="2">
    <location>
        <begin position="146"/>
        <end position="151"/>
    </location>
</feature>
<feature type="helix" evidence="2">
    <location>
        <begin position="156"/>
        <end position="161"/>
    </location>
</feature>
<feature type="helix" evidence="2">
    <location>
        <begin position="164"/>
        <end position="167"/>
    </location>
</feature>
<feature type="helix" evidence="2">
    <location>
        <begin position="174"/>
        <end position="180"/>
    </location>
</feature>
<feature type="helix" evidence="2">
    <location>
        <begin position="184"/>
        <end position="190"/>
    </location>
</feature>
<feature type="strand" evidence="2">
    <location>
        <begin position="200"/>
        <end position="203"/>
    </location>
</feature>
<feature type="helix" evidence="2">
    <location>
        <begin position="209"/>
        <end position="214"/>
    </location>
</feature>
<feature type="helix" evidence="2">
    <location>
        <begin position="216"/>
        <end position="223"/>
    </location>
</feature>
<feature type="turn" evidence="3">
    <location>
        <begin position="229"/>
        <end position="231"/>
    </location>
</feature>
<feature type="helix" evidence="2">
    <location>
        <begin position="232"/>
        <end position="236"/>
    </location>
</feature>
<feature type="helix" evidence="2">
    <location>
        <begin position="238"/>
        <end position="241"/>
    </location>
</feature>
<feature type="turn" evidence="2">
    <location>
        <begin position="242"/>
        <end position="244"/>
    </location>
</feature>
<feature type="strand" evidence="2">
    <location>
        <begin position="246"/>
        <end position="252"/>
    </location>
</feature>
<feature type="strand" evidence="3">
    <location>
        <begin position="254"/>
        <end position="256"/>
    </location>
</feature>
<feature type="helix" evidence="2">
    <location>
        <begin position="258"/>
        <end position="266"/>
    </location>
</feature>
<feature type="strand" evidence="2">
    <location>
        <begin position="268"/>
        <end position="274"/>
    </location>
</feature>
<feature type="helix" evidence="2">
    <location>
        <begin position="278"/>
        <end position="300"/>
    </location>
</feature>
<feature type="strand" evidence="2">
    <location>
        <begin position="310"/>
        <end position="317"/>
    </location>
</feature>
<feature type="helix" evidence="2">
    <location>
        <begin position="321"/>
        <end position="334"/>
    </location>
</feature>
<feature type="helix" evidence="2">
    <location>
        <begin position="335"/>
        <end position="337"/>
    </location>
</feature>
<feature type="helix" evidence="2">
    <location>
        <begin position="347"/>
        <end position="354"/>
    </location>
</feature>
<feature type="turn" evidence="2">
    <location>
        <begin position="359"/>
        <end position="361"/>
    </location>
</feature>
<feature type="turn" evidence="2">
    <location>
        <begin position="364"/>
        <end position="366"/>
    </location>
</feature>
<feature type="helix" evidence="2">
    <location>
        <begin position="371"/>
        <end position="397"/>
    </location>
</feature>
<proteinExistence type="evidence at protein level"/>
<sequence>MSDSSQLHKVAQRANRMLNVLTEQVQLQKDELHANEFYQVYAKAALAKLPLLTRANVDYAVSEMEEKGYVFDKRPAGSSMKYAMSIQNIIDIYEHRGVPKYRDRYSEAYVIFISNLKGGVSKTVSTVSLAHAMRAHPHLLMEDLRILVIDLDPQSSATMFLSHKHSIGIVNATSAQAMLQNVSREELLEEFIVPSVVPGVDVMPASIDDAFIASDWRELCNEHLPGQNIHAVLKENVIDKLKSDYDFILVDSGPHLDAFLKNALASANILFTPLPPATVDFHSSLKYVARLPELVKLISDEGCECQLATNIGFMSKLSNKADHKYCHSLAKEVFGGDMLDVFLPRLDGFERCGESFDTVISANPATYVGSADALKNARIAAEDFAKAVFDRIEFIRSN</sequence>
<protein>
    <recommendedName>
        <fullName>Plasmid partition protein A</fullName>
    </recommendedName>
</protein>